<accession>A5I540</accession>
<accession>A7G6A6</accession>
<keyword id="KW-0963">Cytoplasm</keyword>
<keyword id="KW-1185">Reference proteome</keyword>
<organism>
    <name type="scientific">Clostridium botulinum (strain Hall / ATCC 3502 / NCTC 13319 / Type A)</name>
    <dbReference type="NCBI Taxonomy" id="441771"/>
    <lineage>
        <taxon>Bacteria</taxon>
        <taxon>Bacillati</taxon>
        <taxon>Bacillota</taxon>
        <taxon>Clostridia</taxon>
        <taxon>Eubacteriales</taxon>
        <taxon>Clostridiaceae</taxon>
        <taxon>Clostridium</taxon>
    </lineage>
</organism>
<name>Y2609_CLOBH</name>
<gene>
    <name type="ordered locus">CBO2609</name>
    <name type="ordered locus">CLC_2481</name>
</gene>
<comment type="subcellular location">
    <subcellularLocation>
        <location evidence="1">Cytoplasm</location>
    </subcellularLocation>
</comment>
<comment type="similarity">
    <text evidence="1">Belongs to the UPF0291 family.</text>
</comment>
<feature type="chain" id="PRO_1000065021" description="UPF0291 protein CBO2609/CLC_2481">
    <location>
        <begin position="1"/>
        <end position="62"/>
    </location>
</feature>
<proteinExistence type="inferred from homology"/>
<reference key="1">
    <citation type="journal article" date="2007" name="Genome Res.">
        <title>Genome sequence of a proteolytic (Group I) Clostridium botulinum strain Hall A and comparative analysis of the clostridial genomes.</title>
        <authorList>
            <person name="Sebaihia M."/>
            <person name="Peck M.W."/>
            <person name="Minton N.P."/>
            <person name="Thomson N.R."/>
            <person name="Holden M.T.G."/>
            <person name="Mitchell W.J."/>
            <person name="Carter A.T."/>
            <person name="Bentley S.D."/>
            <person name="Mason D.R."/>
            <person name="Crossman L."/>
            <person name="Paul C.J."/>
            <person name="Ivens A."/>
            <person name="Wells-Bennik M.H.J."/>
            <person name="Davis I.J."/>
            <person name="Cerdeno-Tarraga A.M."/>
            <person name="Churcher C."/>
            <person name="Quail M.A."/>
            <person name="Chillingworth T."/>
            <person name="Feltwell T."/>
            <person name="Fraser A."/>
            <person name="Goodhead I."/>
            <person name="Hance Z."/>
            <person name="Jagels K."/>
            <person name="Larke N."/>
            <person name="Maddison M."/>
            <person name="Moule S."/>
            <person name="Mungall K."/>
            <person name="Norbertczak H."/>
            <person name="Rabbinowitsch E."/>
            <person name="Sanders M."/>
            <person name="Simmonds M."/>
            <person name="White B."/>
            <person name="Whithead S."/>
            <person name="Parkhill J."/>
        </authorList>
    </citation>
    <scope>NUCLEOTIDE SEQUENCE [LARGE SCALE GENOMIC DNA]</scope>
    <source>
        <strain>Hall / ATCC 3502 / NCTC 13319 / Type A</strain>
    </source>
</reference>
<reference key="2">
    <citation type="journal article" date="2007" name="PLoS ONE">
        <title>Analysis of the neurotoxin complex genes in Clostridium botulinum A1-A4 and B1 strains: BoNT/A3, /Ba4 and /B1 clusters are located within plasmids.</title>
        <authorList>
            <person name="Smith T.J."/>
            <person name="Hill K.K."/>
            <person name="Foley B.T."/>
            <person name="Detter J.C."/>
            <person name="Munk A.C."/>
            <person name="Bruce D.C."/>
            <person name="Doggett N.A."/>
            <person name="Smith L.A."/>
            <person name="Marks J.D."/>
            <person name="Xie G."/>
            <person name="Brettin T.S."/>
        </authorList>
    </citation>
    <scope>NUCLEOTIDE SEQUENCE [LARGE SCALE GENOMIC DNA]</scope>
    <source>
        <strain>Hall / ATCC 3502 / NCTC 13319 / Type A</strain>
    </source>
</reference>
<sequence>MDMKKLIERINFLYKKSKEEGLTKEEKVEQQKLRREYTDIIKGNVKVQLEGVEKIPTPNRKN</sequence>
<evidence type="ECO:0000255" key="1">
    <source>
        <dbReference type="HAMAP-Rule" id="MF_01103"/>
    </source>
</evidence>
<dbReference type="EMBL" id="CP000727">
    <property type="protein sequence ID" value="ABS37076.1"/>
    <property type="molecule type" value="Genomic_DNA"/>
</dbReference>
<dbReference type="EMBL" id="AM412317">
    <property type="protein sequence ID" value="CAL84167.1"/>
    <property type="molecule type" value="Genomic_DNA"/>
</dbReference>
<dbReference type="RefSeq" id="WP_011986921.1">
    <property type="nucleotide sequence ID" value="NC_009698.1"/>
</dbReference>
<dbReference type="RefSeq" id="YP_001255105.1">
    <property type="nucleotide sequence ID" value="NC_009495.1"/>
</dbReference>
<dbReference type="RefSeq" id="YP_001388321.1">
    <property type="nucleotide sequence ID" value="NC_009698.1"/>
</dbReference>
<dbReference type="SMR" id="A5I540"/>
<dbReference type="GeneID" id="5186864"/>
<dbReference type="KEGG" id="cbh:CLC_2481"/>
<dbReference type="KEGG" id="cbo:CBO2609"/>
<dbReference type="PATRIC" id="fig|413999.7.peg.2588"/>
<dbReference type="HOGENOM" id="CLU_173137_3_1_9"/>
<dbReference type="PRO" id="PR:A5I540"/>
<dbReference type="Proteomes" id="UP000001986">
    <property type="component" value="Chromosome"/>
</dbReference>
<dbReference type="GO" id="GO:0005737">
    <property type="term" value="C:cytoplasm"/>
    <property type="evidence" value="ECO:0007669"/>
    <property type="project" value="UniProtKB-SubCell"/>
</dbReference>
<dbReference type="Gene3D" id="1.10.287.540">
    <property type="entry name" value="Helix hairpin bin"/>
    <property type="match status" value="1"/>
</dbReference>
<dbReference type="HAMAP" id="MF_01103">
    <property type="entry name" value="UPF0291"/>
    <property type="match status" value="1"/>
</dbReference>
<dbReference type="InterPro" id="IPR009242">
    <property type="entry name" value="DUF896"/>
</dbReference>
<dbReference type="PANTHER" id="PTHR37300">
    <property type="entry name" value="UPF0291 PROTEIN CBO2609/CLC_2481"/>
    <property type="match status" value="1"/>
</dbReference>
<dbReference type="PANTHER" id="PTHR37300:SF1">
    <property type="entry name" value="UPF0291 PROTEIN YNZC"/>
    <property type="match status" value="1"/>
</dbReference>
<dbReference type="Pfam" id="PF05979">
    <property type="entry name" value="DUF896"/>
    <property type="match status" value="1"/>
</dbReference>
<dbReference type="SUPFAM" id="SSF158221">
    <property type="entry name" value="YnzC-like"/>
    <property type="match status" value="1"/>
</dbReference>
<protein>
    <recommendedName>
        <fullName evidence="1">UPF0291 protein CBO2609/CLC_2481</fullName>
    </recommendedName>
</protein>